<protein>
    <recommendedName>
        <fullName>Dynein light chain 1, cytoplasmic</fullName>
    </recommendedName>
    <alternativeName>
        <fullName>8 kDa dynein light chain</fullName>
        <shortName>DLC8</shortName>
    </alternativeName>
    <alternativeName>
        <fullName>Dynein light chain LC8-type 1</fullName>
    </alternativeName>
    <alternativeName>
        <fullName>Protein inhibitor of neuronal nitric oxide synthase</fullName>
        <shortName>PIN</shortName>
        <shortName>mPIN</shortName>
    </alternativeName>
</protein>
<name>DYL1_MOUSE</name>
<accession>P63168</accession>
<accession>Q15701</accession>
<accession>Q3UGE7</accession>
<organism>
    <name type="scientific">Mus musculus</name>
    <name type="common">Mouse</name>
    <dbReference type="NCBI Taxonomy" id="10090"/>
    <lineage>
        <taxon>Eukaryota</taxon>
        <taxon>Metazoa</taxon>
        <taxon>Chordata</taxon>
        <taxon>Craniata</taxon>
        <taxon>Vertebrata</taxon>
        <taxon>Euteleostomi</taxon>
        <taxon>Mammalia</taxon>
        <taxon>Eutheria</taxon>
        <taxon>Euarchontoglires</taxon>
        <taxon>Glires</taxon>
        <taxon>Rodentia</taxon>
        <taxon>Myomorpha</taxon>
        <taxon>Muroidea</taxon>
        <taxon>Muridae</taxon>
        <taxon>Murinae</taxon>
        <taxon>Mus</taxon>
        <taxon>Mus</taxon>
    </lineage>
</organism>
<keyword id="KW-0007">Acetylation</keyword>
<keyword id="KW-0010">Activator</keyword>
<keyword id="KW-0053">Apoptosis</keyword>
<keyword id="KW-0158">Chromosome</keyword>
<keyword id="KW-0963">Cytoplasm</keyword>
<keyword id="KW-0206">Cytoskeleton</keyword>
<keyword id="KW-0227">DNA damage</keyword>
<keyword id="KW-0243">Dynein</keyword>
<keyword id="KW-1017">Isopeptide bond</keyword>
<keyword id="KW-0493">Microtubule</keyword>
<keyword id="KW-0496">Mitochondrion</keyword>
<keyword id="KW-0505">Motor protein</keyword>
<keyword id="KW-0539">Nucleus</keyword>
<keyword id="KW-0597">Phosphoprotein</keyword>
<keyword id="KW-1185">Reference proteome</keyword>
<keyword id="KW-0804">Transcription</keyword>
<keyword id="KW-0805">Transcription regulation</keyword>
<keyword id="KW-0813">Transport</keyword>
<keyword id="KW-0832">Ubl conjugation</keyword>
<evidence type="ECO:0000250" key="1"/>
<evidence type="ECO:0000250" key="2">
    <source>
        <dbReference type="UniProtKB" id="P61285"/>
    </source>
</evidence>
<evidence type="ECO:0000250" key="3">
    <source>
        <dbReference type="UniProtKB" id="P63167"/>
    </source>
</evidence>
<evidence type="ECO:0000250" key="4">
    <source>
        <dbReference type="UniProtKB" id="P63170"/>
    </source>
</evidence>
<evidence type="ECO:0000269" key="5">
    <source>
    </source>
</evidence>
<evidence type="ECO:0000269" key="6">
    <source>
    </source>
</evidence>
<evidence type="ECO:0000305" key="7"/>
<evidence type="ECO:0007744" key="8">
    <source>
    </source>
</evidence>
<feature type="chain" id="PRO_0000195127" description="Dynein light chain 1, cytoplasmic">
    <location>
        <begin position="1"/>
        <end position="89"/>
    </location>
</feature>
<feature type="region of interest" description="Interaction with ESR1" evidence="1">
    <location>
        <begin position="67"/>
        <end position="89"/>
    </location>
</feature>
<feature type="modified residue" description="N6-acetyllysine" evidence="8">
    <location>
        <position position="36"/>
    </location>
</feature>
<feature type="modified residue" description="Phosphoserine" evidence="3">
    <location>
        <position position="88"/>
    </location>
</feature>
<feature type="cross-link" description="Glycyl lysine isopeptide (Lys-Gly) (interchain with G-Cter in SUMO2)" evidence="3">
    <location>
        <position position="43"/>
    </location>
</feature>
<proteinExistence type="evidence at protein level"/>
<comment type="function">
    <text evidence="2 3 4">Acts as one of several non-catalytic accessory components of the cytoplasmic dynein 1 complex that are thought to be involved in linking dynein to cargos and to adapter proteins that regulate dynein function. Cytoplasmic dynein 1 acts as a motor for the intracellular retrograde motility of vesicles and organelles along microtubules. May play a role in changing or maintaining the spatial distribution of cytoskeletal structures (By similarity). In addition to its role in cytoskeleton and transport, acts as a protein-protein adapter, which inhibits and/or sequesters target proteins. Involved in the response to DNA damage by acting as a key regulator of DNA end resection: when phosphorylated at Ser-88, recruited to DNA double-strand breaks (DSBs) by TP53BP1 and acts by disrupting MRE11 dimerization, thereby inhibiting DNA end resection. In a subset of DSBs, DYNLL1 remains unphosphorylated and promotes the recruitment of the Shieldin complex (By similarity). Binds and inhibits the catalytic activity of neuronal nitric oxide synthase/NOS1 (By similarity). Promotes transactivation functions of ESR1 and plays a role in the nuclear localization of ESR1. Regulates apoptotic activities of BCL2L11 by sequestering it to microtubules. Upon apoptotic stimuli the BCL2L11-DYNLL1 complex dissociates from cytoplasmic dynein and translocates to mitochondria and sequesters BCL2 thus neutralizing its antiapoptotic activity (By similarity).</text>
</comment>
<comment type="subunit">
    <text evidence="3 4 5 6">Homodimer (By similarity). Monomer; the monomeric form is incapable of binding to target proteins (By similarity). The cytoplasmic dynein 1 complex consists of two catalytic heavy chains (HCs) and a number of non-catalytic subunits presented by intermediate chains (ICs), light intermediate chains (LICs) and light chains (LCs); the composition seems to vary in respect to the IC, LIC and LC composition (By similarity). The heavy chain homodimer serves as a scaffold for the probable homodimeric assembly of the respective non-catalytic subunits (By similarity). The ICs and LICs bind directly to the HC dimer and the LCs assemble on the IC dimer (By similarity). Interacts with TXNDC17 (By similarity). Interacts with WWC1 and ESR1 (By similarity). The WWC1-DYNLL1 interaction is mandatory for the recruitment and transactivation functions of ESR1 or DYNLL1 to the target chromatin (By similarity). Interacts with BCL2L11 (PubMed:21478148). Interacts with BCL2; the interaction is greatly enhanced in the nucleus and in mitochondria upon induction of apoptosis (By similarity). Interacts with PAK1; the interaction requires dimeric DYNLL1 (By similarity). Interacts with MYZAP (By similarity). Part of an astrin (SPAG5)-kinastrin (SKAP) complex containing KNSTRN, SPAG5, PLK1, DYNLL1 and SGO2A (By similarity). Interacts with ATMIN; this interaction inhibits ATMIN transcriptional activity and hence may play a role in a feedback loop whereby DYNLL1 inhibits transactivation of its own promoter by ATMIN (By similarity). Interacts with NEK9 (not phosphorylated at 'Ser-944') (By similarity). Interacts with BICD2 (PubMed:22956769). Interacts with BCAS1 (By similarity). Interacts with Basson/BSN (By similarity). Interacts with HDAC6 (By similarity). Interacts with TPPP (By similarity). Interacts with AMBRA1 (via TQT motifs); tethering AMBRA1 to the cytoskeleton (By similarity). Interacts with FAM83D/CHICA (via C-terminus) (By similarity). Interacts with HMMR, SPAG5/Astrin and KNSTRN/Kinastrin (By similarity). Interacts with TLK2 (By similarity). Interacts with NOS1 (By similarity). Interacts with WWC1, WWC2 and WWC3. Interacts with MRE11; inhibiting MRE11 homodimerization and activity (By similarity).</text>
</comment>
<comment type="interaction">
    <interactant intactId="EBI-349121">
        <id>P63168</id>
    </interactant>
    <interactant intactId="EBI-2024439">
        <id>Q64368</id>
        <label>Dazl</label>
    </interactant>
    <organismsDiffer>false</organismsDiffer>
    <experiments>12</experiments>
</comment>
<comment type="interaction">
    <interactant intactId="EBI-349121">
        <id>P63168</id>
    </interactant>
    <interactant intactId="EBI-492834">
        <id>O88485</id>
        <label>Dync1i1</label>
    </interactant>
    <organismsDiffer>false</organismsDiffer>
    <experiments>2</experiments>
</comment>
<comment type="interaction">
    <interactant intactId="EBI-349121">
        <id>P63168</id>
    </interactant>
    <interactant intactId="EBI-747278">
        <id>P26367</id>
        <label>PAX6</label>
    </interactant>
    <organismsDiffer>true</organismsDiffer>
    <experiments>3</experiments>
</comment>
<comment type="subcellular location">
    <subcellularLocation>
        <location evidence="3">Cytoplasm</location>
        <location evidence="3">Cytoskeleton</location>
        <location evidence="3">Microtubule organizing center</location>
        <location evidence="3">Centrosome</location>
    </subcellularLocation>
    <subcellularLocation>
        <location evidence="3">Chromosome</location>
    </subcellularLocation>
    <subcellularLocation>
        <location evidence="3">Cytoplasm</location>
        <location evidence="3">Cytoskeleton</location>
    </subcellularLocation>
    <subcellularLocation>
        <location evidence="3">Nucleus</location>
    </subcellularLocation>
    <subcellularLocation>
        <location evidence="3">Mitochondrion</location>
    </subcellularLocation>
    <text evidence="3">Upon induction of apoptosis translocates together with BCL2L11 to mitochondria. Recruited to DNA double-strand breaks (DSBs) by TP53BP1 when phosphorylated at Ser-88.</text>
</comment>
<comment type="PTM">
    <text evidence="3">Phosphorylation at Ser-88 promotes recruitment to DNA double-strand breaks (DSBs) by TP53BP1 and ability to inhibit MRE11.</text>
</comment>
<comment type="similarity">
    <text evidence="7">Belongs to the dynein light chain family.</text>
</comment>
<reference key="1">
    <citation type="submission" date="1997-08" db="EMBL/GenBank/DDBJ databases">
        <title>Intra-renal localization of mPIN (Protein Inhibitor of Nitric oxide synthase).</title>
        <authorList>
            <person name="Mount D.B."/>
        </authorList>
    </citation>
    <scope>NUCLEOTIDE SEQUENCE [MRNA]</scope>
    <source>
        <strain>C57BL/6J</strain>
    </source>
</reference>
<reference key="2">
    <citation type="journal article" date="2005" name="Science">
        <title>The transcriptional landscape of the mammalian genome.</title>
        <authorList>
            <person name="Carninci P."/>
            <person name="Kasukawa T."/>
            <person name="Katayama S."/>
            <person name="Gough J."/>
            <person name="Frith M.C."/>
            <person name="Maeda N."/>
            <person name="Oyama R."/>
            <person name="Ravasi T."/>
            <person name="Lenhard B."/>
            <person name="Wells C."/>
            <person name="Kodzius R."/>
            <person name="Shimokawa K."/>
            <person name="Bajic V.B."/>
            <person name="Brenner S.E."/>
            <person name="Batalov S."/>
            <person name="Forrest A.R."/>
            <person name="Zavolan M."/>
            <person name="Davis M.J."/>
            <person name="Wilming L.G."/>
            <person name="Aidinis V."/>
            <person name="Allen J.E."/>
            <person name="Ambesi-Impiombato A."/>
            <person name="Apweiler R."/>
            <person name="Aturaliya R.N."/>
            <person name="Bailey T.L."/>
            <person name="Bansal M."/>
            <person name="Baxter L."/>
            <person name="Beisel K.W."/>
            <person name="Bersano T."/>
            <person name="Bono H."/>
            <person name="Chalk A.M."/>
            <person name="Chiu K.P."/>
            <person name="Choudhary V."/>
            <person name="Christoffels A."/>
            <person name="Clutterbuck D.R."/>
            <person name="Crowe M.L."/>
            <person name="Dalla E."/>
            <person name="Dalrymple B.P."/>
            <person name="de Bono B."/>
            <person name="Della Gatta G."/>
            <person name="di Bernardo D."/>
            <person name="Down T."/>
            <person name="Engstrom P."/>
            <person name="Fagiolini M."/>
            <person name="Faulkner G."/>
            <person name="Fletcher C.F."/>
            <person name="Fukushima T."/>
            <person name="Furuno M."/>
            <person name="Futaki S."/>
            <person name="Gariboldi M."/>
            <person name="Georgii-Hemming P."/>
            <person name="Gingeras T.R."/>
            <person name="Gojobori T."/>
            <person name="Green R.E."/>
            <person name="Gustincich S."/>
            <person name="Harbers M."/>
            <person name="Hayashi Y."/>
            <person name="Hensch T.K."/>
            <person name="Hirokawa N."/>
            <person name="Hill D."/>
            <person name="Huminiecki L."/>
            <person name="Iacono M."/>
            <person name="Ikeo K."/>
            <person name="Iwama A."/>
            <person name="Ishikawa T."/>
            <person name="Jakt M."/>
            <person name="Kanapin A."/>
            <person name="Katoh M."/>
            <person name="Kawasawa Y."/>
            <person name="Kelso J."/>
            <person name="Kitamura H."/>
            <person name="Kitano H."/>
            <person name="Kollias G."/>
            <person name="Krishnan S.P."/>
            <person name="Kruger A."/>
            <person name="Kummerfeld S.K."/>
            <person name="Kurochkin I.V."/>
            <person name="Lareau L.F."/>
            <person name="Lazarevic D."/>
            <person name="Lipovich L."/>
            <person name="Liu J."/>
            <person name="Liuni S."/>
            <person name="McWilliam S."/>
            <person name="Madan Babu M."/>
            <person name="Madera M."/>
            <person name="Marchionni L."/>
            <person name="Matsuda H."/>
            <person name="Matsuzawa S."/>
            <person name="Miki H."/>
            <person name="Mignone F."/>
            <person name="Miyake S."/>
            <person name="Morris K."/>
            <person name="Mottagui-Tabar S."/>
            <person name="Mulder N."/>
            <person name="Nakano N."/>
            <person name="Nakauchi H."/>
            <person name="Ng P."/>
            <person name="Nilsson R."/>
            <person name="Nishiguchi S."/>
            <person name="Nishikawa S."/>
            <person name="Nori F."/>
            <person name="Ohara O."/>
            <person name="Okazaki Y."/>
            <person name="Orlando V."/>
            <person name="Pang K.C."/>
            <person name="Pavan W.J."/>
            <person name="Pavesi G."/>
            <person name="Pesole G."/>
            <person name="Petrovsky N."/>
            <person name="Piazza S."/>
            <person name="Reed J."/>
            <person name="Reid J.F."/>
            <person name="Ring B.Z."/>
            <person name="Ringwald M."/>
            <person name="Rost B."/>
            <person name="Ruan Y."/>
            <person name="Salzberg S.L."/>
            <person name="Sandelin A."/>
            <person name="Schneider C."/>
            <person name="Schoenbach C."/>
            <person name="Sekiguchi K."/>
            <person name="Semple C.A."/>
            <person name="Seno S."/>
            <person name="Sessa L."/>
            <person name="Sheng Y."/>
            <person name="Shibata Y."/>
            <person name="Shimada H."/>
            <person name="Shimada K."/>
            <person name="Silva D."/>
            <person name="Sinclair B."/>
            <person name="Sperling S."/>
            <person name="Stupka E."/>
            <person name="Sugiura K."/>
            <person name="Sultana R."/>
            <person name="Takenaka Y."/>
            <person name="Taki K."/>
            <person name="Tammoja K."/>
            <person name="Tan S.L."/>
            <person name="Tang S."/>
            <person name="Taylor M.S."/>
            <person name="Tegner J."/>
            <person name="Teichmann S.A."/>
            <person name="Ueda H.R."/>
            <person name="van Nimwegen E."/>
            <person name="Verardo R."/>
            <person name="Wei C.L."/>
            <person name="Yagi K."/>
            <person name="Yamanishi H."/>
            <person name="Zabarovsky E."/>
            <person name="Zhu S."/>
            <person name="Zimmer A."/>
            <person name="Hide W."/>
            <person name="Bult C."/>
            <person name="Grimmond S.M."/>
            <person name="Teasdale R.D."/>
            <person name="Liu E.T."/>
            <person name="Brusic V."/>
            <person name="Quackenbush J."/>
            <person name="Wahlestedt C."/>
            <person name="Mattick J.S."/>
            <person name="Hume D.A."/>
            <person name="Kai C."/>
            <person name="Sasaki D."/>
            <person name="Tomaru Y."/>
            <person name="Fukuda S."/>
            <person name="Kanamori-Katayama M."/>
            <person name="Suzuki M."/>
            <person name="Aoki J."/>
            <person name="Arakawa T."/>
            <person name="Iida J."/>
            <person name="Imamura K."/>
            <person name="Itoh M."/>
            <person name="Kato T."/>
            <person name="Kawaji H."/>
            <person name="Kawagashira N."/>
            <person name="Kawashima T."/>
            <person name="Kojima M."/>
            <person name="Kondo S."/>
            <person name="Konno H."/>
            <person name="Nakano K."/>
            <person name="Ninomiya N."/>
            <person name="Nishio T."/>
            <person name="Okada M."/>
            <person name="Plessy C."/>
            <person name="Shibata K."/>
            <person name="Shiraki T."/>
            <person name="Suzuki S."/>
            <person name="Tagami M."/>
            <person name="Waki K."/>
            <person name="Watahiki A."/>
            <person name="Okamura-Oho Y."/>
            <person name="Suzuki H."/>
            <person name="Kawai J."/>
            <person name="Hayashizaki Y."/>
        </authorList>
    </citation>
    <scope>NUCLEOTIDE SEQUENCE [LARGE SCALE MRNA]</scope>
    <source>
        <strain>C57BL/6J</strain>
        <tissue>Hippocampus</tissue>
        <tissue>Kidney</tissue>
    </source>
</reference>
<reference key="3">
    <citation type="journal article" date="2004" name="Genome Res.">
        <title>The status, quality, and expansion of the NIH full-length cDNA project: the Mammalian Gene Collection (MGC).</title>
        <authorList>
            <consortium name="The MGC Project Team"/>
        </authorList>
    </citation>
    <scope>NUCLEOTIDE SEQUENCE [LARGE SCALE MRNA]</scope>
    <source>
        <strain>FVB/N</strain>
        <tissue>Mammary tumor</tissue>
    </source>
</reference>
<reference key="4">
    <citation type="journal article" date="2010" name="Cell">
        <title>A tissue-specific atlas of mouse protein phosphorylation and expression.</title>
        <authorList>
            <person name="Huttlin E.L."/>
            <person name="Jedrychowski M.P."/>
            <person name="Elias J.E."/>
            <person name="Goswami T."/>
            <person name="Rad R."/>
            <person name="Beausoleil S.A."/>
            <person name="Villen J."/>
            <person name="Haas W."/>
            <person name="Sowa M.E."/>
            <person name="Gygi S.P."/>
        </authorList>
    </citation>
    <scope>IDENTIFICATION BY MASS SPECTROMETRY [LARGE SCALE ANALYSIS]</scope>
    <source>
        <tissue>Brain</tissue>
        <tissue>Heart</tissue>
        <tissue>Kidney</tissue>
        <tissue>Liver</tissue>
        <tissue>Lung</tissue>
        <tissue>Pancreas</tissue>
        <tissue>Spleen</tissue>
        <tissue>Testis</tissue>
    </source>
</reference>
<reference key="5">
    <citation type="journal article" date="2011" name="J. Biol. Chem.">
        <title>Identification of a novel Bcl-2-interacting mediator of cell death (Bim) E3 ligase, tripartite motif-containing protein 2 (TRIM2), and its role in rapid ischemic tolerance-induced neuroprotection.</title>
        <authorList>
            <person name="Thompson S."/>
            <person name="Pearson A.N."/>
            <person name="Ashley M.D."/>
            <person name="Jessick V."/>
            <person name="Murphy B.M."/>
            <person name="Gafken P."/>
            <person name="Henshall D.C."/>
            <person name="Morris K.T."/>
            <person name="Simon R.P."/>
            <person name="Meller R."/>
        </authorList>
    </citation>
    <scope>INTERACTION WITH BCL2L11</scope>
</reference>
<reference key="6">
    <citation type="journal article" date="2012" name="Mol. Biol. Cell">
        <title>BICD2, dynactin, and LIS1 cooperate in regulating dynein recruitment to cellular structures.</title>
        <authorList>
            <person name="Splinter D."/>
            <person name="Razafsky D.S."/>
            <person name="Schlager M.A."/>
            <person name="Serra-Marques A."/>
            <person name="Grigoriev I."/>
            <person name="Demmers J."/>
            <person name="Keijzer N."/>
            <person name="Jiang K."/>
            <person name="Poser I."/>
            <person name="Hyman A.A."/>
            <person name="Hoogenraad C.C."/>
            <person name="King S.J."/>
            <person name="Akhmanova A."/>
        </authorList>
    </citation>
    <scope>INTERACTION WITH BICD2</scope>
</reference>
<reference key="7">
    <citation type="journal article" date="2013" name="Mol. Cell">
        <title>SIRT5-mediated lysine desuccinylation impacts diverse metabolic pathways.</title>
        <authorList>
            <person name="Park J."/>
            <person name="Chen Y."/>
            <person name="Tishkoff D.X."/>
            <person name="Peng C."/>
            <person name="Tan M."/>
            <person name="Dai L."/>
            <person name="Xie Z."/>
            <person name="Zhang Y."/>
            <person name="Zwaans B.M."/>
            <person name="Skinner M.E."/>
            <person name="Lombard D.B."/>
            <person name="Zhao Y."/>
        </authorList>
    </citation>
    <scope>ACETYLATION [LARGE SCALE ANALYSIS] AT LYS-36</scope>
    <scope>IDENTIFICATION BY MASS SPECTROMETRY [LARGE SCALE ANALYSIS]</scope>
    <source>
        <tissue>Embryonic fibroblast</tissue>
    </source>
</reference>
<dbReference type="EMBL" id="AF020185">
    <property type="protein sequence ID" value="AAD01643.1"/>
    <property type="molecule type" value="mRNA"/>
</dbReference>
<dbReference type="EMBL" id="AK002522">
    <property type="protein sequence ID" value="BAB22160.1"/>
    <property type="molecule type" value="mRNA"/>
</dbReference>
<dbReference type="EMBL" id="AK010614">
    <property type="protein sequence ID" value="BAB27063.1"/>
    <property type="molecule type" value="mRNA"/>
</dbReference>
<dbReference type="EMBL" id="AK010685">
    <property type="protein sequence ID" value="BAB27117.1"/>
    <property type="molecule type" value="mRNA"/>
</dbReference>
<dbReference type="EMBL" id="AK013721">
    <property type="protein sequence ID" value="BAB28970.1"/>
    <property type="molecule type" value="mRNA"/>
</dbReference>
<dbReference type="EMBL" id="AK082923">
    <property type="protein sequence ID" value="BAC38691.1"/>
    <property type="molecule type" value="mRNA"/>
</dbReference>
<dbReference type="EMBL" id="AK147977">
    <property type="protein sequence ID" value="BAE28262.1"/>
    <property type="molecule type" value="mRNA"/>
</dbReference>
<dbReference type="EMBL" id="BC008106">
    <property type="protein sequence ID" value="AAH08106.1"/>
    <property type="molecule type" value="mRNA"/>
</dbReference>
<dbReference type="EMBL" id="BC034258">
    <property type="protein sequence ID" value="AAH34258.1"/>
    <property type="molecule type" value="mRNA"/>
</dbReference>
<dbReference type="CCDS" id="CCDS39227.1"/>
<dbReference type="RefSeq" id="NP_062656.3">
    <property type="nucleotide sequence ID" value="NM_019682.4"/>
</dbReference>
<dbReference type="BMRB" id="P63168"/>
<dbReference type="SMR" id="P63168"/>
<dbReference type="BioGRID" id="207994">
    <property type="interactions" value="119"/>
</dbReference>
<dbReference type="ComplexPortal" id="CPX-5699">
    <property type="entry name" value="Cytoplasmic dynein complex, variant 1"/>
</dbReference>
<dbReference type="ELM" id="P63168"/>
<dbReference type="FunCoup" id="P63168">
    <property type="interactions" value="2436"/>
</dbReference>
<dbReference type="IntAct" id="P63168">
    <property type="interactions" value="74"/>
</dbReference>
<dbReference type="MINT" id="P63168"/>
<dbReference type="STRING" id="10090.ENSMUSP00000009157"/>
<dbReference type="GlyGen" id="P63168">
    <property type="glycosylation" value="1 site, 1 O-linked glycan (1 site)"/>
</dbReference>
<dbReference type="iPTMnet" id="P63168"/>
<dbReference type="PhosphoSitePlus" id="P63168"/>
<dbReference type="SwissPalm" id="P63168"/>
<dbReference type="jPOST" id="P63168"/>
<dbReference type="PaxDb" id="10090-ENSMUSP00000009157"/>
<dbReference type="PeptideAtlas" id="P63168"/>
<dbReference type="ProteomicsDB" id="277617"/>
<dbReference type="Pumba" id="P63168"/>
<dbReference type="TopDownProteomics" id="P63168"/>
<dbReference type="Antibodypedia" id="31481">
    <property type="antibodies" value="311 antibodies from 31 providers"/>
</dbReference>
<dbReference type="DNASU" id="56455"/>
<dbReference type="Ensembl" id="ENSMUST00000009157.4">
    <property type="protein sequence ID" value="ENSMUSP00000009157.4"/>
    <property type="gene ID" value="ENSMUSG00000009013.6"/>
</dbReference>
<dbReference type="Ensembl" id="ENSMUST00000112090.2">
    <property type="protein sequence ID" value="ENSMUSP00000107720.2"/>
    <property type="gene ID" value="ENSMUSG00000009013.6"/>
</dbReference>
<dbReference type="GeneID" id="56455"/>
<dbReference type="KEGG" id="mmu:56455"/>
<dbReference type="UCSC" id="uc008zdp.2">
    <property type="organism name" value="mouse"/>
</dbReference>
<dbReference type="AGR" id="MGI:1861457"/>
<dbReference type="CTD" id="8655"/>
<dbReference type="MGI" id="MGI:1861457">
    <property type="gene designation" value="Dynll1"/>
</dbReference>
<dbReference type="VEuPathDB" id="HostDB:ENSMUSG00000009013"/>
<dbReference type="eggNOG" id="KOG3430">
    <property type="taxonomic scope" value="Eukaryota"/>
</dbReference>
<dbReference type="GeneTree" id="ENSGT00390000000378"/>
<dbReference type="HOGENOM" id="CLU_070944_4_0_1"/>
<dbReference type="InParanoid" id="P63168"/>
<dbReference type="OMA" id="THEKHCF"/>
<dbReference type="OrthoDB" id="10033309at2759"/>
<dbReference type="PhylomeDB" id="P63168"/>
<dbReference type="TreeFam" id="TF300264"/>
<dbReference type="Reactome" id="R-MMU-111446">
    <property type="pathway name" value="Activation of BIM and translocation to mitochondria"/>
</dbReference>
<dbReference type="Reactome" id="R-MMU-141444">
    <property type="pathway name" value="Amplification of signal from unattached kinetochores via a MAD2 inhibitory signal"/>
</dbReference>
<dbReference type="Reactome" id="R-MMU-1632852">
    <property type="pathway name" value="Macroautophagy"/>
</dbReference>
<dbReference type="Reactome" id="R-MMU-2132295">
    <property type="pathway name" value="MHC class II antigen presentation"/>
</dbReference>
<dbReference type="Reactome" id="R-MMU-2467813">
    <property type="pathway name" value="Separation of Sister Chromatids"/>
</dbReference>
<dbReference type="Reactome" id="R-MMU-2500257">
    <property type="pathway name" value="Resolution of Sister Chromatid Cohesion"/>
</dbReference>
<dbReference type="Reactome" id="R-MMU-2565942">
    <property type="pathway name" value="Regulation of PLK1 Activity at G2/M Transition"/>
</dbReference>
<dbReference type="Reactome" id="R-MMU-3371497">
    <property type="pathway name" value="HSP90 chaperone cycle for steroid hormone receptors (SHR) in the presence of ligand"/>
</dbReference>
<dbReference type="Reactome" id="R-MMU-380259">
    <property type="pathway name" value="Loss of Nlp from mitotic centrosomes"/>
</dbReference>
<dbReference type="Reactome" id="R-MMU-380270">
    <property type="pathway name" value="Recruitment of mitotic centrosome proteins and complexes"/>
</dbReference>
<dbReference type="Reactome" id="R-MMU-380284">
    <property type="pathway name" value="Loss of proteins required for interphase microtubule organization from the centrosome"/>
</dbReference>
<dbReference type="Reactome" id="R-MMU-380320">
    <property type="pathway name" value="Recruitment of NuMA to mitotic centrosomes"/>
</dbReference>
<dbReference type="Reactome" id="R-MMU-5620912">
    <property type="pathway name" value="Anchoring of the basal body to the plasma membrane"/>
</dbReference>
<dbReference type="Reactome" id="R-MMU-5620924">
    <property type="pathway name" value="Intraflagellar transport"/>
</dbReference>
<dbReference type="Reactome" id="R-MMU-5663220">
    <property type="pathway name" value="RHO GTPases Activate Formins"/>
</dbReference>
<dbReference type="Reactome" id="R-MMU-6798695">
    <property type="pathway name" value="Neutrophil degranulation"/>
</dbReference>
<dbReference type="Reactome" id="R-MMU-6807878">
    <property type="pathway name" value="COPI-mediated anterograde transport"/>
</dbReference>
<dbReference type="Reactome" id="R-MMU-6811436">
    <property type="pathway name" value="COPI-independent Golgi-to-ER retrograde traffic"/>
</dbReference>
<dbReference type="Reactome" id="R-MMU-68877">
    <property type="pathway name" value="Mitotic Prometaphase"/>
</dbReference>
<dbReference type="Reactome" id="R-MMU-8854518">
    <property type="pathway name" value="AURKA Activation by TPX2"/>
</dbReference>
<dbReference type="Reactome" id="R-MMU-9646399">
    <property type="pathway name" value="Aggrephagy"/>
</dbReference>
<dbReference type="Reactome" id="R-MMU-9648025">
    <property type="pathway name" value="EML4 and NUDC in mitotic spindle formation"/>
</dbReference>
<dbReference type="BioGRID-ORCS" id="56455">
    <property type="hits" value="12 hits in 44 CRISPR screens"/>
</dbReference>
<dbReference type="CD-CODE" id="CE726F99">
    <property type="entry name" value="Postsynaptic density"/>
</dbReference>
<dbReference type="ChiTaRS" id="Dynll1">
    <property type="organism name" value="mouse"/>
</dbReference>
<dbReference type="PRO" id="PR:P63168"/>
<dbReference type="Proteomes" id="UP000000589">
    <property type="component" value="Chromosome 5"/>
</dbReference>
<dbReference type="RNAct" id="P63168">
    <property type="molecule type" value="protein"/>
</dbReference>
<dbReference type="Bgee" id="ENSMUSG00000009013">
    <property type="expression patterns" value="Expressed in floor plate of midbrain and 252 other cell types or tissues"/>
</dbReference>
<dbReference type="GO" id="GO:0005813">
    <property type="term" value="C:centrosome"/>
    <property type="evidence" value="ECO:0007669"/>
    <property type="project" value="UniProtKB-SubCell"/>
</dbReference>
<dbReference type="GO" id="GO:0005929">
    <property type="term" value="C:cilium"/>
    <property type="evidence" value="ECO:0007669"/>
    <property type="project" value="GOC"/>
</dbReference>
<dbReference type="GO" id="GO:0005868">
    <property type="term" value="C:cytoplasmic dynein complex"/>
    <property type="evidence" value="ECO:0000353"/>
    <property type="project" value="MGI"/>
</dbReference>
<dbReference type="GO" id="GO:0005856">
    <property type="term" value="C:cytoskeleton"/>
    <property type="evidence" value="ECO:0000314"/>
    <property type="project" value="MGI"/>
</dbReference>
<dbReference type="GO" id="GO:0005829">
    <property type="term" value="C:cytosol"/>
    <property type="evidence" value="ECO:0000314"/>
    <property type="project" value="MGI"/>
</dbReference>
<dbReference type="GO" id="GO:0030286">
    <property type="term" value="C:dynein complex"/>
    <property type="evidence" value="ECO:0000314"/>
    <property type="project" value="UniProtKB"/>
</dbReference>
<dbReference type="GO" id="GO:0000776">
    <property type="term" value="C:kinetochore"/>
    <property type="evidence" value="ECO:0000250"/>
    <property type="project" value="UniProtKB"/>
</dbReference>
<dbReference type="GO" id="GO:0016020">
    <property type="term" value="C:membrane"/>
    <property type="evidence" value="ECO:0000314"/>
    <property type="project" value="MGI"/>
</dbReference>
<dbReference type="GO" id="GO:0005874">
    <property type="term" value="C:microtubule"/>
    <property type="evidence" value="ECO:0007669"/>
    <property type="project" value="UniProtKB-KW"/>
</dbReference>
<dbReference type="GO" id="GO:0005739">
    <property type="term" value="C:mitochondrion"/>
    <property type="evidence" value="ECO:0007669"/>
    <property type="project" value="UniProtKB-SubCell"/>
</dbReference>
<dbReference type="GO" id="GO:0072686">
    <property type="term" value="C:mitotic spindle"/>
    <property type="evidence" value="ECO:0000250"/>
    <property type="project" value="UniProtKB"/>
</dbReference>
<dbReference type="GO" id="GO:0005634">
    <property type="term" value="C:nucleus"/>
    <property type="evidence" value="ECO:0007669"/>
    <property type="project" value="UniProtKB-SubCell"/>
</dbReference>
<dbReference type="GO" id="GO:0035861">
    <property type="term" value="C:site of double-strand break"/>
    <property type="evidence" value="ECO:0000250"/>
    <property type="project" value="UniProtKB"/>
</dbReference>
<dbReference type="GO" id="GO:0045505">
    <property type="term" value="F:dynein intermediate chain binding"/>
    <property type="evidence" value="ECO:0000353"/>
    <property type="project" value="MGI"/>
</dbReference>
<dbReference type="GO" id="GO:0004857">
    <property type="term" value="F:enzyme inhibitor activity"/>
    <property type="evidence" value="ECO:0000250"/>
    <property type="project" value="UniProtKB"/>
</dbReference>
<dbReference type="GO" id="GO:0019904">
    <property type="term" value="F:protein domain specific binding"/>
    <property type="evidence" value="ECO:0000353"/>
    <property type="project" value="MGI"/>
</dbReference>
<dbReference type="GO" id="GO:0006915">
    <property type="term" value="P:apoptotic process"/>
    <property type="evidence" value="ECO:0007669"/>
    <property type="project" value="UniProtKB-KW"/>
</dbReference>
<dbReference type="GO" id="GO:0006974">
    <property type="term" value="P:DNA damage response"/>
    <property type="evidence" value="ECO:0007669"/>
    <property type="project" value="UniProtKB-KW"/>
</dbReference>
<dbReference type="GO" id="GO:0035721">
    <property type="term" value="P:intraciliary retrograde transport"/>
    <property type="evidence" value="ECO:0000315"/>
    <property type="project" value="MGI"/>
</dbReference>
<dbReference type="GO" id="GO:0160040">
    <property type="term" value="P:mitocytosis"/>
    <property type="evidence" value="ECO:0000315"/>
    <property type="project" value="MGI"/>
</dbReference>
<dbReference type="GO" id="GO:0044458">
    <property type="term" value="P:motile cilium assembly"/>
    <property type="evidence" value="ECO:0000315"/>
    <property type="project" value="MGI"/>
</dbReference>
<dbReference type="GO" id="GO:0110027">
    <property type="term" value="P:negative regulation of DNA strand resection involved in replication fork processing"/>
    <property type="evidence" value="ECO:0000250"/>
    <property type="project" value="UniProtKB"/>
</dbReference>
<dbReference type="GO" id="GO:0045019">
    <property type="term" value="P:negative regulation of nitric oxide biosynthetic process"/>
    <property type="evidence" value="ECO:0000266"/>
    <property type="project" value="MGI"/>
</dbReference>
<dbReference type="GO" id="GO:1902857">
    <property type="term" value="P:positive regulation of non-motile cilium assembly"/>
    <property type="evidence" value="ECO:0000315"/>
    <property type="project" value="MGI"/>
</dbReference>
<dbReference type="GO" id="GO:0051881">
    <property type="term" value="P:regulation of mitochondrial membrane potential"/>
    <property type="evidence" value="ECO:0000315"/>
    <property type="project" value="MGI"/>
</dbReference>
<dbReference type="CDD" id="cd21452">
    <property type="entry name" value="DLC-like_DYNLL1_DYNLL2"/>
    <property type="match status" value="1"/>
</dbReference>
<dbReference type="FunFam" id="3.30.740.10:FF:000001">
    <property type="entry name" value="Dynein light chain"/>
    <property type="match status" value="1"/>
</dbReference>
<dbReference type="Gene3D" id="3.30.740.10">
    <property type="entry name" value="Protein Inhibitor Of Neuronal Nitric Oxide Synthase"/>
    <property type="match status" value="1"/>
</dbReference>
<dbReference type="InterPro" id="IPR037177">
    <property type="entry name" value="DLC_sf"/>
</dbReference>
<dbReference type="InterPro" id="IPR019763">
    <property type="entry name" value="Dynein_light_1/2_CS"/>
</dbReference>
<dbReference type="InterPro" id="IPR001372">
    <property type="entry name" value="Dynein_light_chain_typ-1/2"/>
</dbReference>
<dbReference type="PANTHER" id="PTHR11886">
    <property type="entry name" value="DYNEIN LIGHT CHAIN"/>
    <property type="match status" value="1"/>
</dbReference>
<dbReference type="PANTHER" id="PTHR11886:SF91">
    <property type="entry name" value="DYNEIN LIGHT CHAIN 1, CYTOPLASMIC"/>
    <property type="match status" value="1"/>
</dbReference>
<dbReference type="Pfam" id="PF01221">
    <property type="entry name" value="Dynein_light"/>
    <property type="match status" value="1"/>
</dbReference>
<dbReference type="SMART" id="SM01375">
    <property type="entry name" value="Dynein_light"/>
    <property type="match status" value="1"/>
</dbReference>
<dbReference type="SUPFAM" id="SSF54648">
    <property type="entry name" value="DLC"/>
    <property type="match status" value="1"/>
</dbReference>
<dbReference type="PROSITE" id="PS01239">
    <property type="entry name" value="DYNEIN_LIGHT_1"/>
    <property type="match status" value="1"/>
</dbReference>
<sequence length="89" mass="10366">MCDRKAVIKNADMSEEMQQDSVECATQALEKYNIEKDIAAHIKKEFDKKYNPTWHCIVGRNFGSYVTHETKHFIYFYLGQVAILLFKSG</sequence>
<gene>
    <name type="primary">Dynll1</name>
    <name type="synonym">Dlc1</name>
    <name type="synonym">Dncl1</name>
    <name type="synonym">Dnclc1</name>
</gene>